<keyword id="KW-0963">Cytoplasm</keyword>
<keyword id="KW-0378">Hydrolase</keyword>
<keyword id="KW-0479">Metal-binding</keyword>
<keyword id="KW-0547">Nucleotide-binding</keyword>
<keyword id="KW-1185">Reference proteome</keyword>
<feature type="chain" id="PRO_0000335274" description="5'-nucleotidase SurE">
    <location>
        <begin position="1"/>
        <end position="249"/>
    </location>
</feature>
<feature type="binding site" evidence="1">
    <location>
        <position position="9"/>
    </location>
    <ligand>
        <name>a divalent metal cation</name>
        <dbReference type="ChEBI" id="CHEBI:60240"/>
    </ligand>
</feature>
<feature type="binding site" evidence="1">
    <location>
        <position position="10"/>
    </location>
    <ligand>
        <name>a divalent metal cation</name>
        <dbReference type="ChEBI" id="CHEBI:60240"/>
    </ligand>
</feature>
<feature type="binding site" evidence="1">
    <location>
        <position position="40"/>
    </location>
    <ligand>
        <name>a divalent metal cation</name>
        <dbReference type="ChEBI" id="CHEBI:60240"/>
    </ligand>
</feature>
<feature type="binding site" evidence="1">
    <location>
        <position position="92"/>
    </location>
    <ligand>
        <name>a divalent metal cation</name>
        <dbReference type="ChEBI" id="CHEBI:60240"/>
    </ligand>
</feature>
<dbReference type="EC" id="3.1.3.5" evidence="1"/>
<dbReference type="EMBL" id="CP000447">
    <property type="protein sequence ID" value="ABI70910.1"/>
    <property type="molecule type" value="Genomic_DNA"/>
</dbReference>
<dbReference type="RefSeq" id="WP_011636531.1">
    <property type="nucleotide sequence ID" value="NC_008345.1"/>
</dbReference>
<dbReference type="SMR" id="Q086A5"/>
<dbReference type="STRING" id="318167.Sfri_1057"/>
<dbReference type="KEGG" id="sfr:Sfri_1057"/>
<dbReference type="eggNOG" id="COG0496">
    <property type="taxonomic scope" value="Bacteria"/>
</dbReference>
<dbReference type="HOGENOM" id="CLU_045192_1_2_6"/>
<dbReference type="OrthoDB" id="9780815at2"/>
<dbReference type="Proteomes" id="UP000000684">
    <property type="component" value="Chromosome"/>
</dbReference>
<dbReference type="GO" id="GO:0005737">
    <property type="term" value="C:cytoplasm"/>
    <property type="evidence" value="ECO:0007669"/>
    <property type="project" value="UniProtKB-SubCell"/>
</dbReference>
<dbReference type="GO" id="GO:0008254">
    <property type="term" value="F:3'-nucleotidase activity"/>
    <property type="evidence" value="ECO:0007669"/>
    <property type="project" value="TreeGrafter"/>
</dbReference>
<dbReference type="GO" id="GO:0008253">
    <property type="term" value="F:5'-nucleotidase activity"/>
    <property type="evidence" value="ECO:0007669"/>
    <property type="project" value="UniProtKB-UniRule"/>
</dbReference>
<dbReference type="GO" id="GO:0004309">
    <property type="term" value="F:exopolyphosphatase activity"/>
    <property type="evidence" value="ECO:0007669"/>
    <property type="project" value="TreeGrafter"/>
</dbReference>
<dbReference type="GO" id="GO:0046872">
    <property type="term" value="F:metal ion binding"/>
    <property type="evidence" value="ECO:0007669"/>
    <property type="project" value="UniProtKB-UniRule"/>
</dbReference>
<dbReference type="GO" id="GO:0000166">
    <property type="term" value="F:nucleotide binding"/>
    <property type="evidence" value="ECO:0007669"/>
    <property type="project" value="UniProtKB-KW"/>
</dbReference>
<dbReference type="FunFam" id="3.40.1210.10:FF:000001">
    <property type="entry name" value="5'/3'-nucleotidase SurE"/>
    <property type="match status" value="1"/>
</dbReference>
<dbReference type="Gene3D" id="3.40.1210.10">
    <property type="entry name" value="Survival protein SurE-like phosphatase/nucleotidase"/>
    <property type="match status" value="1"/>
</dbReference>
<dbReference type="HAMAP" id="MF_00060">
    <property type="entry name" value="SurE"/>
    <property type="match status" value="1"/>
</dbReference>
<dbReference type="InterPro" id="IPR030048">
    <property type="entry name" value="SurE"/>
</dbReference>
<dbReference type="InterPro" id="IPR002828">
    <property type="entry name" value="SurE-like_Pase/nucleotidase"/>
</dbReference>
<dbReference type="InterPro" id="IPR036523">
    <property type="entry name" value="SurE-like_sf"/>
</dbReference>
<dbReference type="NCBIfam" id="NF001489">
    <property type="entry name" value="PRK00346.1-3"/>
    <property type="match status" value="1"/>
</dbReference>
<dbReference type="NCBIfam" id="NF001490">
    <property type="entry name" value="PRK00346.1-4"/>
    <property type="match status" value="1"/>
</dbReference>
<dbReference type="NCBIfam" id="TIGR00087">
    <property type="entry name" value="surE"/>
    <property type="match status" value="1"/>
</dbReference>
<dbReference type="PANTHER" id="PTHR30457">
    <property type="entry name" value="5'-NUCLEOTIDASE SURE"/>
    <property type="match status" value="1"/>
</dbReference>
<dbReference type="PANTHER" id="PTHR30457:SF12">
    <property type="entry name" value="5'_3'-NUCLEOTIDASE SURE"/>
    <property type="match status" value="1"/>
</dbReference>
<dbReference type="Pfam" id="PF01975">
    <property type="entry name" value="SurE"/>
    <property type="match status" value="1"/>
</dbReference>
<dbReference type="SUPFAM" id="SSF64167">
    <property type="entry name" value="SurE-like"/>
    <property type="match status" value="1"/>
</dbReference>
<organism>
    <name type="scientific">Shewanella frigidimarina (strain NCIMB 400)</name>
    <dbReference type="NCBI Taxonomy" id="318167"/>
    <lineage>
        <taxon>Bacteria</taxon>
        <taxon>Pseudomonadati</taxon>
        <taxon>Pseudomonadota</taxon>
        <taxon>Gammaproteobacteria</taxon>
        <taxon>Alteromonadales</taxon>
        <taxon>Shewanellaceae</taxon>
        <taxon>Shewanella</taxon>
    </lineage>
</organism>
<reference key="1">
    <citation type="submission" date="2006-08" db="EMBL/GenBank/DDBJ databases">
        <title>Complete sequence of Shewanella frigidimarina NCIMB 400.</title>
        <authorList>
            <consortium name="US DOE Joint Genome Institute"/>
            <person name="Copeland A."/>
            <person name="Lucas S."/>
            <person name="Lapidus A."/>
            <person name="Barry K."/>
            <person name="Detter J.C."/>
            <person name="Glavina del Rio T."/>
            <person name="Hammon N."/>
            <person name="Israni S."/>
            <person name="Dalin E."/>
            <person name="Tice H."/>
            <person name="Pitluck S."/>
            <person name="Fredrickson J.K."/>
            <person name="Kolker E."/>
            <person name="McCuel L.A."/>
            <person name="DiChristina T."/>
            <person name="Nealson K.H."/>
            <person name="Newman D."/>
            <person name="Tiedje J.M."/>
            <person name="Zhou J."/>
            <person name="Romine M.F."/>
            <person name="Culley D.E."/>
            <person name="Serres M."/>
            <person name="Chertkov O."/>
            <person name="Brettin T."/>
            <person name="Bruce D."/>
            <person name="Han C."/>
            <person name="Tapia R."/>
            <person name="Gilna P."/>
            <person name="Schmutz J."/>
            <person name="Larimer F."/>
            <person name="Land M."/>
            <person name="Hauser L."/>
            <person name="Kyrpides N."/>
            <person name="Mikhailova N."/>
            <person name="Richardson P."/>
        </authorList>
    </citation>
    <scope>NUCLEOTIDE SEQUENCE [LARGE SCALE GENOMIC DNA]</scope>
    <source>
        <strain>NCIMB 400</strain>
    </source>
</reference>
<accession>Q086A5</accession>
<evidence type="ECO:0000255" key="1">
    <source>
        <dbReference type="HAMAP-Rule" id="MF_00060"/>
    </source>
</evidence>
<gene>
    <name evidence="1" type="primary">surE</name>
    <name type="ordered locus">Sfri_1057</name>
</gene>
<name>SURE_SHEFN</name>
<proteinExistence type="inferred from homology"/>
<protein>
    <recommendedName>
        <fullName evidence="1">5'-nucleotidase SurE</fullName>
        <ecNumber evidence="1">3.1.3.5</ecNumber>
    </recommendedName>
    <alternativeName>
        <fullName evidence="1">Nucleoside 5'-monophosphate phosphohydrolase</fullName>
    </alternativeName>
</protein>
<comment type="function">
    <text evidence="1">Nucleotidase that shows phosphatase activity on nucleoside 5'-monophosphates.</text>
</comment>
<comment type="catalytic activity">
    <reaction evidence="1">
        <text>a ribonucleoside 5'-phosphate + H2O = a ribonucleoside + phosphate</text>
        <dbReference type="Rhea" id="RHEA:12484"/>
        <dbReference type="ChEBI" id="CHEBI:15377"/>
        <dbReference type="ChEBI" id="CHEBI:18254"/>
        <dbReference type="ChEBI" id="CHEBI:43474"/>
        <dbReference type="ChEBI" id="CHEBI:58043"/>
        <dbReference type="EC" id="3.1.3.5"/>
    </reaction>
</comment>
<comment type="cofactor">
    <cofactor evidence="1">
        <name>a divalent metal cation</name>
        <dbReference type="ChEBI" id="CHEBI:60240"/>
    </cofactor>
    <text evidence="1">Binds 1 divalent metal cation per subunit.</text>
</comment>
<comment type="subcellular location">
    <subcellularLocation>
        <location evidence="1">Cytoplasm</location>
    </subcellularLocation>
</comment>
<comment type="similarity">
    <text evidence="1">Belongs to the SurE nucleotidase family.</text>
</comment>
<sequence length="249" mass="26196">MINILVSNDDGVRAPGIIALTHALSEFAQVLTVAPDRNCSGASNSLTLTNPLRINNLENGYISVNGTPTDCVHLAIRQLCQTEPDIVVSGINAGANMGDDTLYSGTVAAAMEGRFLGLPAIAVSLVGKSLIHYDTAAIFAAKIVKGLLEHPISRDQILNVNVPDLPLAQIKGIKVTRLGARHKAEGMIKTQDPAGKDIYWLGPVGSEQDAGEGTDFGAVAAGYVSITPLTVDLTAYNQLDGLADWIIKI</sequence>